<organism>
    <name type="scientific">Mus musculus</name>
    <name type="common">Mouse</name>
    <dbReference type="NCBI Taxonomy" id="10090"/>
    <lineage>
        <taxon>Eukaryota</taxon>
        <taxon>Metazoa</taxon>
        <taxon>Chordata</taxon>
        <taxon>Craniata</taxon>
        <taxon>Vertebrata</taxon>
        <taxon>Euteleostomi</taxon>
        <taxon>Mammalia</taxon>
        <taxon>Eutheria</taxon>
        <taxon>Euarchontoglires</taxon>
        <taxon>Glires</taxon>
        <taxon>Rodentia</taxon>
        <taxon>Myomorpha</taxon>
        <taxon>Muroidea</taxon>
        <taxon>Muridae</taxon>
        <taxon>Murinae</taxon>
        <taxon>Mus</taxon>
        <taxon>Mus</taxon>
    </lineage>
</organism>
<keyword id="KW-0067">ATP-binding</keyword>
<keyword id="KW-0966">Cell projection</keyword>
<keyword id="KW-0175">Coiled coil</keyword>
<keyword id="KW-0963">Cytoplasm</keyword>
<keyword id="KW-0968">Cytoplasmic vesicle</keyword>
<keyword id="KW-0206">Cytoskeleton</keyword>
<keyword id="KW-0903">Direct protein sequencing</keyword>
<keyword id="KW-0493">Microtubule</keyword>
<keyword id="KW-0505">Motor protein</keyword>
<keyword id="KW-0547">Nucleotide-binding</keyword>
<keyword id="KW-0597">Phosphoprotein</keyword>
<keyword id="KW-1185">Reference proteome</keyword>
<keyword id="KW-0677">Repeat</keyword>
<keyword id="KW-0853">WD repeat</keyword>
<evidence type="ECO:0000250" key="1">
    <source>
        <dbReference type="UniProtKB" id="F1M5N7"/>
    </source>
</evidence>
<evidence type="ECO:0000250" key="2">
    <source>
        <dbReference type="UniProtKB" id="O75037"/>
    </source>
</evidence>
<evidence type="ECO:0000255" key="3"/>
<evidence type="ECO:0000255" key="4">
    <source>
        <dbReference type="PROSITE-ProRule" id="PRU00283"/>
    </source>
</evidence>
<evidence type="ECO:0000256" key="5">
    <source>
        <dbReference type="SAM" id="MobiDB-lite"/>
    </source>
</evidence>
<evidence type="ECO:0000269" key="6">
    <source>
    </source>
</evidence>
<evidence type="ECO:0000269" key="7">
    <source>
    </source>
</evidence>
<evidence type="ECO:0000269" key="8">
    <source>
    </source>
</evidence>
<evidence type="ECO:0000269" key="9">
    <source>
    </source>
</evidence>
<evidence type="ECO:0000305" key="10"/>
<evidence type="ECO:0007744" key="11">
    <source>
    </source>
</evidence>
<evidence type="ECO:0007744" key="12">
    <source>
    </source>
</evidence>
<protein>
    <recommendedName>
        <fullName>Kinesin-like protein KIF21B</fullName>
    </recommendedName>
    <alternativeName>
        <fullName>Kinesin-like protein KIF6</fullName>
    </alternativeName>
</protein>
<comment type="function">
    <text evidence="6 8 9">Plus-end directed microtubule-dependent motor protein which displays processive activity (PubMed:10225949, PubMed:27117409). Is involved in regulation of microtubule dynamics, synapse function and neuronal morphology, including dendritic tree branching and spine formation (PubMed:27117409). Plays a role in lerning and memory (PubMed:27117409). Involved in delivery of gamma-aminobutyric acid (GABA(A)) receptor to cell surface (PubMed:25172774).</text>
</comment>
<comment type="subunit">
    <text evidence="1 7">Interacts with TRIM3; the interaction positively affects motility of KIF21B (PubMed:24086586). Interacts with GABARAP and GABA(A) receptor subunits: GABRG2, GABRA1 and GABRA2 (By similarity). May interact with GABA(A) receptor subunits: GABRB2 and GABRB3 (By similarity).</text>
</comment>
<comment type="subcellular location">
    <subcellularLocation>
        <location evidence="6">Cytoplasm</location>
        <location evidence="6">Cytoskeleton</location>
    </subcellularLocation>
    <subcellularLocation>
        <location evidence="6 7 8 9">Cell projection</location>
        <location evidence="6 7 8 9">Dendrite</location>
    </subcellularLocation>
    <subcellularLocation>
        <location evidence="7">Cell projection</location>
        <location evidence="7">Growth cone</location>
    </subcellularLocation>
    <subcellularLocation>
        <location evidence="6">Cell projection</location>
        <location evidence="6">Axon</location>
    </subcellularLocation>
    <subcellularLocation>
        <location evidence="1">Cytoplasmic vesicle</location>
    </subcellularLocation>
</comment>
<comment type="tissue specificity">
    <text evidence="6 8 9">Expressed in brain (at protein level) (PubMed:25172774, PubMed:27117409). Expressed in spleen and at lower levels in testes (PubMed:10225949).</text>
</comment>
<comment type="disruption phenotype">
    <text evidence="9">Mutant mice exhibit behavioral changes involving learning and memory deficits.</text>
</comment>
<comment type="similarity">
    <text evidence="4">Belongs to the TRAFAC class myosin-kinesin ATPase superfamily. Kinesin family.</text>
</comment>
<dbReference type="EMBL" id="AF202893">
    <property type="protein sequence ID" value="AAF17084.1"/>
    <property type="molecule type" value="mRNA"/>
</dbReference>
<dbReference type="EMBL" id="AC124550">
    <property type="status" value="NOT_ANNOTATED_CDS"/>
    <property type="molecule type" value="Genomic_DNA"/>
</dbReference>
<dbReference type="EMBL" id="U71298">
    <property type="protein sequence ID" value="AAB39695.1"/>
    <property type="molecule type" value="mRNA"/>
</dbReference>
<dbReference type="RefSeq" id="NP_001034561.1">
    <property type="nucleotide sequence ID" value="NM_001039472.1"/>
</dbReference>
<dbReference type="SMR" id="Q9QXL1"/>
<dbReference type="BioGRID" id="200940">
    <property type="interactions" value="19"/>
</dbReference>
<dbReference type="FunCoup" id="Q9QXL1">
    <property type="interactions" value="70"/>
</dbReference>
<dbReference type="IntAct" id="Q9QXL1">
    <property type="interactions" value="4"/>
</dbReference>
<dbReference type="STRING" id="10090.ENSMUSP00000074661"/>
<dbReference type="GlyGen" id="Q9QXL1">
    <property type="glycosylation" value="5 sites, 2 N-linked glycans (2 sites), 1 O-linked glycan (2 sites)"/>
</dbReference>
<dbReference type="iPTMnet" id="Q9QXL1"/>
<dbReference type="PhosphoSitePlus" id="Q9QXL1"/>
<dbReference type="jPOST" id="Q9QXL1"/>
<dbReference type="PaxDb" id="10090-ENSMUSP00000074661"/>
<dbReference type="ProteomicsDB" id="264753"/>
<dbReference type="DNASU" id="16565"/>
<dbReference type="GeneID" id="16565"/>
<dbReference type="KEGG" id="mmu:16565"/>
<dbReference type="AGR" id="MGI:109234"/>
<dbReference type="CTD" id="23046"/>
<dbReference type="MGI" id="MGI:109234">
    <property type="gene designation" value="Kif21b"/>
</dbReference>
<dbReference type="eggNOG" id="KOG0244">
    <property type="taxonomic scope" value="Eukaryota"/>
</dbReference>
<dbReference type="InParanoid" id="Q9QXL1"/>
<dbReference type="OrthoDB" id="3176171at2759"/>
<dbReference type="Reactome" id="R-MMU-2132295">
    <property type="pathway name" value="MHC class II antigen presentation"/>
</dbReference>
<dbReference type="Reactome" id="R-MMU-6811434">
    <property type="pathway name" value="COPI-dependent Golgi-to-ER retrograde traffic"/>
</dbReference>
<dbReference type="Reactome" id="R-MMU-983189">
    <property type="pathway name" value="Kinesins"/>
</dbReference>
<dbReference type="BioGRID-ORCS" id="16565">
    <property type="hits" value="1 hit in 80 CRISPR screens"/>
</dbReference>
<dbReference type="ChiTaRS" id="Kif21b">
    <property type="organism name" value="mouse"/>
</dbReference>
<dbReference type="PRO" id="PR:Q9QXL1"/>
<dbReference type="Proteomes" id="UP000000589">
    <property type="component" value="Unplaced"/>
</dbReference>
<dbReference type="RNAct" id="Q9QXL1">
    <property type="molecule type" value="protein"/>
</dbReference>
<dbReference type="GO" id="GO:0032839">
    <property type="term" value="C:dendrite cytoplasm"/>
    <property type="evidence" value="ECO:0007669"/>
    <property type="project" value="GOC"/>
</dbReference>
<dbReference type="GO" id="GO:0098978">
    <property type="term" value="C:glutamatergic synapse"/>
    <property type="evidence" value="ECO:0000314"/>
    <property type="project" value="SynGO"/>
</dbReference>
<dbReference type="GO" id="GO:0030426">
    <property type="term" value="C:growth cone"/>
    <property type="evidence" value="ECO:0007669"/>
    <property type="project" value="UniProtKB-SubCell"/>
</dbReference>
<dbReference type="GO" id="GO:0005874">
    <property type="term" value="C:microtubule"/>
    <property type="evidence" value="ECO:0007669"/>
    <property type="project" value="UniProtKB-KW"/>
</dbReference>
<dbReference type="GO" id="GO:0098845">
    <property type="term" value="C:postsynaptic endosome"/>
    <property type="evidence" value="ECO:0000314"/>
    <property type="project" value="SynGO"/>
</dbReference>
<dbReference type="GO" id="GO:0005524">
    <property type="term" value="F:ATP binding"/>
    <property type="evidence" value="ECO:0007669"/>
    <property type="project" value="UniProtKB-KW"/>
</dbReference>
<dbReference type="GO" id="GO:0008017">
    <property type="term" value="F:microtubule binding"/>
    <property type="evidence" value="ECO:0007669"/>
    <property type="project" value="InterPro"/>
</dbReference>
<dbReference type="GO" id="GO:0003777">
    <property type="term" value="F:microtubule motor activity"/>
    <property type="evidence" value="ECO:0007669"/>
    <property type="project" value="InterPro"/>
</dbReference>
<dbReference type="GO" id="GO:0007420">
    <property type="term" value="P:brain development"/>
    <property type="evidence" value="ECO:0000315"/>
    <property type="project" value="MGI"/>
</dbReference>
<dbReference type="GO" id="GO:0022038">
    <property type="term" value="P:corpus callosum development"/>
    <property type="evidence" value="ECO:0000315"/>
    <property type="project" value="MGI"/>
</dbReference>
<dbReference type="GO" id="GO:0099072">
    <property type="term" value="P:regulation of postsynaptic membrane neurotransmitter receptor levels"/>
    <property type="evidence" value="ECO:0000314"/>
    <property type="project" value="SynGO"/>
</dbReference>
<dbReference type="GO" id="GO:0098934">
    <property type="term" value="P:retrograde dendritic transport"/>
    <property type="evidence" value="ECO:0000314"/>
    <property type="project" value="SynGO"/>
</dbReference>
<dbReference type="CDD" id="cd01372">
    <property type="entry name" value="KISc_KIF4"/>
    <property type="match status" value="1"/>
</dbReference>
<dbReference type="CDD" id="cd22262">
    <property type="entry name" value="Rcc_KIF21B"/>
    <property type="match status" value="1"/>
</dbReference>
<dbReference type="CDD" id="cd00200">
    <property type="entry name" value="WD40"/>
    <property type="match status" value="1"/>
</dbReference>
<dbReference type="FunFam" id="2.130.10.10:FF:000131">
    <property type="entry name" value="Kinesin family member 21A"/>
    <property type="match status" value="1"/>
</dbReference>
<dbReference type="FunFam" id="2.130.10.10:FF:000158">
    <property type="entry name" value="Kinesin family member 21A"/>
    <property type="match status" value="1"/>
</dbReference>
<dbReference type="FunFam" id="2.130.10.10:FF:000490">
    <property type="entry name" value="Kinesin family member 21B"/>
    <property type="match status" value="1"/>
</dbReference>
<dbReference type="FunFam" id="3.40.850.10:FF:000337">
    <property type="entry name" value="Kinesin-like protein"/>
    <property type="match status" value="1"/>
</dbReference>
<dbReference type="FunFam" id="3.40.850.10:FF:000208">
    <property type="entry name" value="kinesin-like protein KIF21B isoform X1"/>
    <property type="match status" value="1"/>
</dbReference>
<dbReference type="Gene3D" id="3.40.850.10">
    <property type="entry name" value="Kinesin motor domain"/>
    <property type="match status" value="1"/>
</dbReference>
<dbReference type="Gene3D" id="2.130.10.10">
    <property type="entry name" value="YVTN repeat-like/Quinoprotein amine dehydrogenase"/>
    <property type="match status" value="2"/>
</dbReference>
<dbReference type="InterPro" id="IPR056533">
    <property type="entry name" value="KIF21A/B_hel_1"/>
</dbReference>
<dbReference type="InterPro" id="IPR056532">
    <property type="entry name" value="KIF21A/B_hel_2"/>
</dbReference>
<dbReference type="InterPro" id="IPR027640">
    <property type="entry name" value="Kinesin-like_fam"/>
</dbReference>
<dbReference type="InterPro" id="IPR019821">
    <property type="entry name" value="Kinesin_motor_CS"/>
</dbReference>
<dbReference type="InterPro" id="IPR001752">
    <property type="entry name" value="Kinesin_motor_dom"/>
</dbReference>
<dbReference type="InterPro" id="IPR036961">
    <property type="entry name" value="Kinesin_motor_dom_sf"/>
</dbReference>
<dbReference type="InterPro" id="IPR027417">
    <property type="entry name" value="P-loop_NTPase"/>
</dbReference>
<dbReference type="InterPro" id="IPR015943">
    <property type="entry name" value="WD40/YVTN_repeat-like_dom_sf"/>
</dbReference>
<dbReference type="InterPro" id="IPR019775">
    <property type="entry name" value="WD40_repeat_CS"/>
</dbReference>
<dbReference type="InterPro" id="IPR036322">
    <property type="entry name" value="WD40_repeat_dom_sf"/>
</dbReference>
<dbReference type="InterPro" id="IPR001680">
    <property type="entry name" value="WD40_rpt"/>
</dbReference>
<dbReference type="PANTHER" id="PTHR47969">
    <property type="entry name" value="CHROMOSOME-ASSOCIATED KINESIN KIF4A-RELATED"/>
    <property type="match status" value="1"/>
</dbReference>
<dbReference type="PANTHER" id="PTHR47969:SF32">
    <property type="entry name" value="KINESIN-LIKE PROTEIN KIF21B ISOFORM X1"/>
    <property type="match status" value="1"/>
</dbReference>
<dbReference type="Pfam" id="PF23203">
    <property type="entry name" value="KIF21A"/>
    <property type="match status" value="1"/>
</dbReference>
<dbReference type="Pfam" id="PF23204">
    <property type="entry name" value="KIF21A_2nd"/>
    <property type="match status" value="1"/>
</dbReference>
<dbReference type="Pfam" id="PF00225">
    <property type="entry name" value="Kinesin"/>
    <property type="match status" value="1"/>
</dbReference>
<dbReference type="Pfam" id="PF00400">
    <property type="entry name" value="WD40"/>
    <property type="match status" value="5"/>
</dbReference>
<dbReference type="PRINTS" id="PR00380">
    <property type="entry name" value="KINESINHEAVY"/>
</dbReference>
<dbReference type="SMART" id="SM00129">
    <property type="entry name" value="KISc"/>
    <property type="match status" value="1"/>
</dbReference>
<dbReference type="SMART" id="SM00320">
    <property type="entry name" value="WD40"/>
    <property type="match status" value="7"/>
</dbReference>
<dbReference type="SUPFAM" id="SSF52540">
    <property type="entry name" value="P-loop containing nucleoside triphosphate hydrolases"/>
    <property type="match status" value="1"/>
</dbReference>
<dbReference type="SUPFAM" id="SSF46579">
    <property type="entry name" value="Prefoldin"/>
    <property type="match status" value="1"/>
</dbReference>
<dbReference type="SUPFAM" id="SSF50978">
    <property type="entry name" value="WD40 repeat-like"/>
    <property type="match status" value="1"/>
</dbReference>
<dbReference type="PROSITE" id="PS00411">
    <property type="entry name" value="KINESIN_MOTOR_1"/>
    <property type="match status" value="1"/>
</dbReference>
<dbReference type="PROSITE" id="PS50067">
    <property type="entry name" value="KINESIN_MOTOR_2"/>
    <property type="match status" value="1"/>
</dbReference>
<dbReference type="PROSITE" id="PS00678">
    <property type="entry name" value="WD_REPEATS_1"/>
    <property type="match status" value="1"/>
</dbReference>
<dbReference type="PROSITE" id="PS50082">
    <property type="entry name" value="WD_REPEATS_2"/>
    <property type="match status" value="4"/>
</dbReference>
<dbReference type="PROSITE" id="PS50294">
    <property type="entry name" value="WD_REPEATS_REGION"/>
    <property type="match status" value="1"/>
</dbReference>
<proteinExistence type="evidence at protein level"/>
<name>KI21B_MOUSE</name>
<feature type="chain" id="PRO_0000125465" description="Kinesin-like protein KIF21B">
    <location>
        <begin position="1"/>
        <end position="1668"/>
    </location>
</feature>
<feature type="domain" description="Kinesin motor" evidence="4">
    <location>
        <begin position="8"/>
        <end position="371"/>
    </location>
</feature>
<feature type="repeat" description="WD 1">
    <location>
        <begin position="1308"/>
        <end position="1345"/>
    </location>
</feature>
<feature type="repeat" description="WD 2">
    <location>
        <begin position="1348"/>
        <end position="1386"/>
    </location>
</feature>
<feature type="repeat" description="WD 3">
    <location>
        <begin position="1412"/>
        <end position="1450"/>
    </location>
</feature>
<feature type="repeat" description="WD 4">
    <location>
        <begin position="1453"/>
        <end position="1495"/>
    </location>
</feature>
<feature type="repeat" description="WD 5">
    <location>
        <begin position="1504"/>
        <end position="1541"/>
    </location>
</feature>
<feature type="repeat" description="WD 6">
    <location>
        <begin position="1545"/>
        <end position="1584"/>
    </location>
</feature>
<feature type="repeat" description="WD 7">
    <location>
        <begin position="1587"/>
        <end position="1624"/>
    </location>
</feature>
<feature type="region of interest" description="Interaction with TRIM3" evidence="7">
    <location>
        <begin position="401"/>
        <end position="1100"/>
    </location>
</feature>
<feature type="region of interest" description="Disordered" evidence="5">
    <location>
        <begin position="553"/>
        <end position="629"/>
    </location>
</feature>
<feature type="region of interest" description="Disordered" evidence="5">
    <location>
        <begin position="837"/>
        <end position="866"/>
    </location>
</feature>
<feature type="region of interest" description="Disordered" evidence="5">
    <location>
        <begin position="1199"/>
        <end position="1253"/>
    </location>
</feature>
<feature type="coiled-coil region" evidence="3">
    <location>
        <begin position="372"/>
        <end position="465"/>
    </location>
</feature>
<feature type="coiled-coil region" evidence="3">
    <location>
        <begin position="924"/>
        <end position="1019"/>
    </location>
</feature>
<feature type="compositionally biased region" description="Acidic residues" evidence="5">
    <location>
        <begin position="579"/>
        <end position="628"/>
    </location>
</feature>
<feature type="compositionally biased region" description="Low complexity" evidence="5">
    <location>
        <begin position="847"/>
        <end position="866"/>
    </location>
</feature>
<feature type="compositionally biased region" description="Polar residues" evidence="5">
    <location>
        <begin position="1199"/>
        <end position="1219"/>
    </location>
</feature>
<feature type="binding site" evidence="4">
    <location>
        <begin position="87"/>
        <end position="94"/>
    </location>
    <ligand>
        <name>ATP</name>
        <dbReference type="ChEBI" id="CHEBI:30616"/>
    </ligand>
</feature>
<feature type="modified residue" description="Phosphoserine" evidence="11">
    <location>
        <position position="580"/>
    </location>
</feature>
<feature type="modified residue" description="Phosphothreonine" evidence="11">
    <location>
        <position position="583"/>
    </location>
</feature>
<feature type="modified residue" description="Phosphoserine" evidence="2">
    <location>
        <position position="1150"/>
    </location>
</feature>
<feature type="modified residue" description="Phosphoserine" evidence="12">
    <location>
        <position position="1168"/>
    </location>
</feature>
<feature type="modified residue" description="Phosphoserine" evidence="12">
    <location>
        <position position="1217"/>
    </location>
</feature>
<feature type="modified residue" description="Phosphothreonine" evidence="12">
    <location>
        <position position="1239"/>
    </location>
</feature>
<feature type="modified residue" description="Phosphoserine" evidence="2">
    <location>
        <position position="1243"/>
    </location>
</feature>
<feature type="mutagenesis site" description="Abolishes processive activity." evidence="9">
    <original>T</original>
    <variation>N</variation>
    <location>
        <position position="96"/>
    </location>
</feature>
<feature type="sequence conflict" description="In Ref. 1; AAF17084." evidence="10" ref="1">
    <original>S</original>
    <variation>A</variation>
    <location>
        <position position="1276"/>
    </location>
</feature>
<gene>
    <name type="primary">Kif21b</name>
    <name type="synonym">Kif6</name>
</gene>
<sequence>MAGQGDCCVKVAVRIRPQLSKEKIEGCHICTSVTPGEPQVLLGKDKAFTYDFVFDLDTWQEQIYSTCVSKLIEGCFEGYNATVLAYGQTGAGKTYTMGTGFDTVTSEEEQGIIPRAIAHLFRGIDERKRRAQEKGVTGPEFKVSAQFLELYNEEILDLFDSTRDPDARHRRSNIKIHEDANGGIYTTGVTSRLINSQEELIQCLKQGALSRTTASTQMNVQSSRSHAIFTIHLCQMRVCAQPDLVNETVTGLPDGAAPTGTEYETLTAKFHFVDLAGSERLKRTGATGERAKEGISINCGLLALGNVISALGDQSKKVVHVPYRDSKLTRLLQDSLGGNSQTIMIACVSPSDRDFMETLNTLKYANRARNIKNKVVVNQDKTSQQISALRAEIARLQMELMEYKAGKRVIGEDGTEGYSDLFRENAMLQKENGALRLRVKAMQEAIDAINNRVTQLMSQEANLLLAKAGDGNEAIGALIQNYIREIEELRTKLLESEAMNESLRRSLSRASARNPYSLGASPAGPAFGGSPATSMEDASEVIRKAKQDLERLKKKEVRQRRKSPEKEAFKKRAKLQAENSEETDENEAEEEEEERDESGCEEEEGREDEDEDSGSEESLVDSDSDPEEKEVNFQADLADLTCEIEIKQKLIDELENSQRRLQTLKHQYEEKLILLQNKIRDTQLERDRVLQNLSTMECYTEEKANKIKADYEKRLREMNRDLQKLQAAQKEHARLLKNQSRYERELKKLQAEVAEMKKAKVALMKQMREEQQRRRLVETKRNREIAQLKKEQRRQEFQIRALESQKRQQEIVLRRKTQEVSALRRLAKPMSERVAGRVGLKPPNMDSGAEVSASTTSSEAESGARSVSSIVRQWNRKIDHFLGDRPTATVNGGRPARKKFQKKGASQSFSKAARLKWQSLERRIIDIVMQRMTIVNLEADMERLIKKREELFLLQEALRRKREHLQAESPEEEKGLQELAEEIEVLAANIDYINDSITDCQATIVQLEETKEELDSTDTSVVISSCSLAEARLLLDNFLKASIDKGLQVAQKEAQIRLLEGRLRQTDMTGSSQNHLLLDALREKAEAHPELQALIYNVQHENGYASTDEEVSEFSEGSFSQSFTMKGSTSHDDFKFKGEPKLSAQMKAVSAECLGPPLDSSTKNITKSLASLVEIKEDGVGFSIRDPYYRDKVSRTVSLPTRGSTFPRQSRGATDTSPLTRRKSYDRGQPIRSTDMGFTPPSSPPTRPRNDRNVFSRLTSNQSQGSALDKSDDSDSSLSEVLRGIITPIGGAKGARTAPLQCISMAEGHTKPILCLDATDELLFTGSKDRSCKMWNLVTGQEIAALKGHPNNVVSIKYCSHSGLVFSVSSSYIKVWDIRDSAKCIRTLTSSGQVISGDACIATSTRAITSAQGEHQINQMALSPSGSMLYVASGNAVRIWELNRFQPIGKLTGHIGPVMCLTVTQTSNQHDLVVTGSKDHYVKMFQLGDCVTGTIGPTHNFEPPHYDGIECLAIQGDILFSGSRDNGIKKWDLDQQELIQQIPNAHKDWVCALAFVPGRPMLLSACRAGFIKVWNVDNFTPIGEIKGHDSPINAICTNSKHIFTASSDCRVKLWNYVPGLTPCLPRRVLAIKGRAPPCPDLPPPPLTLPILPFPVFPPPRSELLLHVT</sequence>
<reference key="1">
    <citation type="journal article" date="1999" name="J. Cell Biol.">
        <title>Novel dendritic kinesin sorting identified by different process targeting of two related kinesins: KIF21A and KIF21B.</title>
        <authorList>
            <person name="Marszalek J.R."/>
            <person name="Weiner J.A."/>
            <person name="Farlow S.J."/>
            <person name="Chun J."/>
            <person name="Goldstein L.S."/>
        </authorList>
    </citation>
    <scope>NUCLEOTIDE SEQUENCE [MRNA]</scope>
    <scope>FUNCTION</scope>
    <scope>TISSUE SPECIFICITY</scope>
    <scope>SUBCELLULAR LOCATION</scope>
</reference>
<reference key="2">
    <citation type="journal article" date="2009" name="PLoS Biol.">
        <title>Lineage-specific biology revealed by a finished genome assembly of the mouse.</title>
        <authorList>
            <person name="Church D.M."/>
            <person name="Goodstadt L."/>
            <person name="Hillier L.W."/>
            <person name="Zody M.C."/>
            <person name="Goldstein S."/>
            <person name="She X."/>
            <person name="Bult C.J."/>
            <person name="Agarwala R."/>
            <person name="Cherry J.L."/>
            <person name="DiCuccio M."/>
            <person name="Hlavina W."/>
            <person name="Kapustin Y."/>
            <person name="Meric P."/>
            <person name="Maglott D."/>
            <person name="Birtle Z."/>
            <person name="Marques A.C."/>
            <person name="Graves T."/>
            <person name="Zhou S."/>
            <person name="Teague B."/>
            <person name="Potamousis K."/>
            <person name="Churas C."/>
            <person name="Place M."/>
            <person name="Herschleb J."/>
            <person name="Runnheim R."/>
            <person name="Forrest D."/>
            <person name="Amos-Landgraf J."/>
            <person name="Schwartz D.C."/>
            <person name="Cheng Z."/>
            <person name="Lindblad-Toh K."/>
            <person name="Eichler E.E."/>
            <person name="Ponting C.P."/>
        </authorList>
    </citation>
    <scope>NUCLEOTIDE SEQUENCE [LARGE SCALE GENOMIC DNA]</scope>
    <source>
        <strain>C57BL/6J</strain>
    </source>
</reference>
<reference key="3">
    <citation type="submission" date="1996-09" db="EMBL/GenBank/DDBJ databases">
        <title>Identifying differentially regulated genes in mouse brain using arbitrarily primed PCR.</title>
        <authorList>
            <person name="Honeycutt R.J."/>
            <person name="McClelland M."/>
            <person name="Chada K."/>
            <person name="Welsh J."/>
        </authorList>
    </citation>
    <scope>NUCLEOTIDE SEQUENCE [MRNA] OF 100-173</scope>
    <source>
        <tissue>Brain cortex</tissue>
    </source>
</reference>
<reference key="4">
    <citation type="submission" date="2009-01" db="UniProtKB">
        <authorList>
            <person name="Lubec G."/>
            <person name="Sunyer B."/>
            <person name="Chen W.-Q."/>
        </authorList>
    </citation>
    <scope>PROTEIN SEQUENCE OF 491-504</scope>
    <scope>IDENTIFICATION BY MASS SPECTROMETRY</scope>
    <source>
        <strain>OF1</strain>
        <tissue>Hippocampus</tissue>
    </source>
</reference>
<reference key="5">
    <citation type="journal article" date="2004" name="Mol. Cell. Proteomics">
        <title>Phosphoproteomic analysis of the developing mouse brain.</title>
        <authorList>
            <person name="Ballif B.A."/>
            <person name="Villen J."/>
            <person name="Beausoleil S.A."/>
            <person name="Schwartz D."/>
            <person name="Gygi S.P."/>
        </authorList>
    </citation>
    <scope>PHOSPHORYLATION [LARGE SCALE ANALYSIS] AT SER-580 AND THR-583</scope>
    <scope>IDENTIFICATION BY MASS SPECTROMETRY [LARGE SCALE ANALYSIS]</scope>
    <source>
        <tissue>Embryonic brain</tissue>
    </source>
</reference>
<reference key="6">
    <citation type="journal article" date="2010" name="Cell">
        <title>A tissue-specific atlas of mouse protein phosphorylation and expression.</title>
        <authorList>
            <person name="Huttlin E.L."/>
            <person name="Jedrychowski M.P."/>
            <person name="Elias J.E."/>
            <person name="Goswami T."/>
            <person name="Rad R."/>
            <person name="Beausoleil S.A."/>
            <person name="Villen J."/>
            <person name="Haas W."/>
            <person name="Sowa M.E."/>
            <person name="Gygi S.P."/>
        </authorList>
    </citation>
    <scope>PHOSPHORYLATION [LARGE SCALE ANALYSIS] AT SER-1168; SER-1217 AND THR-1239</scope>
    <scope>IDENTIFICATION BY MASS SPECTROMETRY [LARGE SCALE ANALYSIS]</scope>
    <source>
        <tissue>Brain</tissue>
        <tissue>Lung</tissue>
        <tissue>Pancreas</tissue>
        <tissue>Spleen</tissue>
    </source>
</reference>
<reference key="7">
    <citation type="journal article" date="2013" name="PLoS ONE">
        <title>TRIM3 regulates the motility of the kinesin motor protein KIF21B.</title>
        <authorList>
            <person name="Labonte D."/>
            <person name="Thies E."/>
            <person name="Pechmann Y."/>
            <person name="Groffen A.J."/>
            <person name="Verhage M."/>
            <person name="Smit A.B."/>
            <person name="van Kesteren R.E."/>
            <person name="Kneussel M."/>
        </authorList>
    </citation>
    <scope>INTERACTION WITH TRIM3</scope>
    <scope>SUBCELLULAR LOCATION</scope>
</reference>
<reference key="8">
    <citation type="journal article" date="2014" name="Eur. J. Cell Biol.">
        <title>The kinesin KIF21B participates in the cell surface delivery of gamma2 subunit-containing GABAA receptors.</title>
        <authorList>
            <person name="Labonte D."/>
            <person name="Thies E."/>
            <person name="Kneussel M."/>
        </authorList>
    </citation>
    <scope>FUNCTION</scope>
    <scope>SUBCELLULAR LOCATION</scope>
    <scope>TISSUE SPECIFICITY</scope>
</reference>
<reference key="9">
    <citation type="journal article" date="2016" name="Cell Rep.">
        <title>The kinesin KIF21B regulates microtubule dynamics and is essential for neuronal morphology, synapse function, and learning and memory.</title>
        <authorList>
            <person name="Muhia M."/>
            <person name="Thies E."/>
            <person name="Labonte D."/>
            <person name="Ghiretti A.E."/>
            <person name="Gromova K.V."/>
            <person name="Xompero F."/>
            <person name="Lappe-Siefke C."/>
            <person name="Hermans-Borgmeyer I."/>
            <person name="Kuhl D."/>
            <person name="Schweizer M."/>
            <person name="Ohana O."/>
            <person name="Schwarz J.R."/>
            <person name="Holzbaur E.L."/>
            <person name="Kneussel M."/>
        </authorList>
    </citation>
    <scope>FUNCTION</scope>
    <scope>SUBCELLULAR LOCATION</scope>
    <scope>TISSUE SPECIFICITY</scope>
    <scope>DISRUPTION PHENOTYPE</scope>
    <scope>MUTAGENESIS OF THR-96</scope>
</reference>
<accession>Q9QXL1</accession>
<accession>E9PUY6</accession>
<accession>P97424</accession>